<accession>B7MSL1</accession>
<gene>
    <name evidence="1" type="primary">ulaG</name>
    <name type="ordered locus">ECED1_4979</name>
</gene>
<proteinExistence type="inferred from homology"/>
<protein>
    <recommendedName>
        <fullName evidence="1">Probable L-ascorbate-6-phosphate lactonase UlaG</fullName>
        <ecNumber evidence="1">3.1.1.-</ecNumber>
    </recommendedName>
    <alternativeName>
        <fullName evidence="1">L-ascorbate utilization protein G</fullName>
    </alternativeName>
</protein>
<keyword id="KW-0963">Cytoplasm</keyword>
<keyword id="KW-0378">Hydrolase</keyword>
<evidence type="ECO:0000255" key="1">
    <source>
        <dbReference type="HAMAP-Rule" id="MF_01266"/>
    </source>
</evidence>
<sequence>MSKVKSITRESWILSTFPEWGSWLNEEIEQEQVAPGTFAMWWLGCTGIWLKSEGGANVCVDFWCGTGKQSHGNPLMKQGHQMQRMAGVKKLQPNLRTTPFVLDPFAIRQIDAVLATHDHNDHIDVNVAAAVMQNCADDVPFIGPKTCVDLWIGWGVPKERCIVVKPGDVVKVKDIEIHALDAFDRTALITLPADQKAAGVLPDGMDDRAVNYLFKTPGGTLYHSGDSHYSNYYAKHGNEHQIDVALGSYGENPRGITDKMTSADILRMGEALNAKVVIPFHHDIWSNFQADPQEIRVLWEMKKDRLKYGFKPFIWQVGGKFTWPLDKDNFEYHYPRGFDDCFTIEPDLPFKSFL</sequence>
<name>ULAG_ECO81</name>
<comment type="function">
    <text evidence="1">Probably catalyzes the hydrolysis of L-ascorbate-6-P into 3-keto-L-gulonate-6-P. Is essential for L-ascorbate utilization under anaerobic conditions.</text>
</comment>
<comment type="catalytic activity">
    <reaction evidence="1">
        <text>L-ascorbate 6-phosphate + H2O = 3-dehydro-L-gulonate 6-phosphate</text>
        <dbReference type="Rhea" id="RHEA:28803"/>
        <dbReference type="ChEBI" id="CHEBI:15377"/>
        <dbReference type="ChEBI" id="CHEBI:58774"/>
        <dbReference type="ChEBI" id="CHEBI:61698"/>
    </reaction>
</comment>
<comment type="cofactor">
    <cofactor evidence="1">
        <name>a divalent metal cation</name>
        <dbReference type="ChEBI" id="CHEBI:60240"/>
    </cofactor>
</comment>
<comment type="pathway">
    <text evidence="1">Cofactor degradation; L-ascorbate degradation; D-xylulose 5-phosphate from L-ascorbate: step 1/4.</text>
</comment>
<comment type="subcellular location">
    <subcellularLocation>
        <location evidence="1">Cytoplasm</location>
    </subcellularLocation>
</comment>
<comment type="induction">
    <text evidence="1">Induced by L-ascorbate. Repressed by UlaR.</text>
</comment>
<comment type="similarity">
    <text evidence="1">Belongs to the UlaG family.</text>
</comment>
<organism>
    <name type="scientific">Escherichia coli O81 (strain ED1a)</name>
    <dbReference type="NCBI Taxonomy" id="585397"/>
    <lineage>
        <taxon>Bacteria</taxon>
        <taxon>Pseudomonadati</taxon>
        <taxon>Pseudomonadota</taxon>
        <taxon>Gammaproteobacteria</taxon>
        <taxon>Enterobacterales</taxon>
        <taxon>Enterobacteriaceae</taxon>
        <taxon>Escherichia</taxon>
    </lineage>
</organism>
<reference key="1">
    <citation type="journal article" date="2009" name="PLoS Genet.">
        <title>Organised genome dynamics in the Escherichia coli species results in highly diverse adaptive paths.</title>
        <authorList>
            <person name="Touchon M."/>
            <person name="Hoede C."/>
            <person name="Tenaillon O."/>
            <person name="Barbe V."/>
            <person name="Baeriswyl S."/>
            <person name="Bidet P."/>
            <person name="Bingen E."/>
            <person name="Bonacorsi S."/>
            <person name="Bouchier C."/>
            <person name="Bouvet O."/>
            <person name="Calteau A."/>
            <person name="Chiapello H."/>
            <person name="Clermont O."/>
            <person name="Cruveiller S."/>
            <person name="Danchin A."/>
            <person name="Diard M."/>
            <person name="Dossat C."/>
            <person name="Karoui M.E."/>
            <person name="Frapy E."/>
            <person name="Garry L."/>
            <person name="Ghigo J.M."/>
            <person name="Gilles A.M."/>
            <person name="Johnson J."/>
            <person name="Le Bouguenec C."/>
            <person name="Lescat M."/>
            <person name="Mangenot S."/>
            <person name="Martinez-Jehanne V."/>
            <person name="Matic I."/>
            <person name="Nassif X."/>
            <person name="Oztas S."/>
            <person name="Petit M.A."/>
            <person name="Pichon C."/>
            <person name="Rouy Z."/>
            <person name="Ruf C.S."/>
            <person name="Schneider D."/>
            <person name="Tourret J."/>
            <person name="Vacherie B."/>
            <person name="Vallenet D."/>
            <person name="Medigue C."/>
            <person name="Rocha E.P.C."/>
            <person name="Denamur E."/>
        </authorList>
    </citation>
    <scope>NUCLEOTIDE SEQUENCE [LARGE SCALE GENOMIC DNA]</scope>
    <source>
        <strain>ED1a</strain>
    </source>
</reference>
<dbReference type="EC" id="3.1.1.-" evidence="1"/>
<dbReference type="EMBL" id="CU928162">
    <property type="protein sequence ID" value="CAR10936.1"/>
    <property type="molecule type" value="Genomic_DNA"/>
</dbReference>
<dbReference type="RefSeq" id="WP_001350385.1">
    <property type="nucleotide sequence ID" value="NC_011745.1"/>
</dbReference>
<dbReference type="SMR" id="B7MSL1"/>
<dbReference type="KEGG" id="ecq:ECED1_4979"/>
<dbReference type="HOGENOM" id="CLU_074775_0_0_6"/>
<dbReference type="UniPathway" id="UPA00263">
    <property type="reaction ID" value="UER00377"/>
</dbReference>
<dbReference type="Proteomes" id="UP000000748">
    <property type="component" value="Chromosome"/>
</dbReference>
<dbReference type="GO" id="GO:0005737">
    <property type="term" value="C:cytoplasm"/>
    <property type="evidence" value="ECO:0007669"/>
    <property type="project" value="UniProtKB-SubCell"/>
</dbReference>
<dbReference type="GO" id="GO:0035460">
    <property type="term" value="F:L-ascorbate 6-phosphate lactonase activity"/>
    <property type="evidence" value="ECO:0007669"/>
    <property type="project" value="InterPro"/>
</dbReference>
<dbReference type="GO" id="GO:0030145">
    <property type="term" value="F:manganese ion binding"/>
    <property type="evidence" value="ECO:0007669"/>
    <property type="project" value="InterPro"/>
</dbReference>
<dbReference type="GO" id="GO:0019854">
    <property type="term" value="P:L-ascorbic acid catabolic process"/>
    <property type="evidence" value="ECO:0007669"/>
    <property type="project" value="UniProtKB-UniRule"/>
</dbReference>
<dbReference type="CDD" id="cd16284">
    <property type="entry name" value="UlaG-like_MBL-fold"/>
    <property type="match status" value="1"/>
</dbReference>
<dbReference type="FunFam" id="3.60.15.10:FF:000004">
    <property type="entry name" value="Probable L-ascorbate-6-phosphate lactonase UlaG"/>
    <property type="match status" value="1"/>
</dbReference>
<dbReference type="Gene3D" id="3.60.15.10">
    <property type="entry name" value="Ribonuclease Z/Hydroxyacylglutathione hydrolase-like"/>
    <property type="match status" value="1"/>
</dbReference>
<dbReference type="HAMAP" id="MF_01266">
    <property type="entry name" value="UlaG"/>
    <property type="match status" value="1"/>
</dbReference>
<dbReference type="InterPro" id="IPR023951">
    <property type="entry name" value="L-ascorbate_6P_UlaG"/>
</dbReference>
<dbReference type="InterPro" id="IPR001279">
    <property type="entry name" value="Metallo-B-lactamas"/>
</dbReference>
<dbReference type="InterPro" id="IPR036866">
    <property type="entry name" value="RibonucZ/Hydroxyglut_hydro"/>
</dbReference>
<dbReference type="InterPro" id="IPR048021">
    <property type="entry name" value="UlaG-like_MBL-fold"/>
</dbReference>
<dbReference type="InterPro" id="IPR050114">
    <property type="entry name" value="UPF0173_UPF0282_UlaG_hydrolase"/>
</dbReference>
<dbReference type="NCBIfam" id="NF008688">
    <property type="entry name" value="PRK11709.1"/>
    <property type="match status" value="1"/>
</dbReference>
<dbReference type="PANTHER" id="PTHR43546:SF9">
    <property type="entry name" value="L-ASCORBATE-6-PHOSPHATE LACTONASE ULAG-RELATED"/>
    <property type="match status" value="1"/>
</dbReference>
<dbReference type="PANTHER" id="PTHR43546">
    <property type="entry name" value="UPF0173 METAL-DEPENDENT HYDROLASE MJ1163-RELATED"/>
    <property type="match status" value="1"/>
</dbReference>
<dbReference type="Pfam" id="PF12706">
    <property type="entry name" value="Lactamase_B_2"/>
    <property type="match status" value="1"/>
</dbReference>
<dbReference type="SUPFAM" id="SSF56281">
    <property type="entry name" value="Metallo-hydrolase/oxidoreductase"/>
    <property type="match status" value="1"/>
</dbReference>
<feature type="chain" id="PRO_1000165139" description="Probable L-ascorbate-6-phosphate lactonase UlaG">
    <location>
        <begin position="1"/>
        <end position="354"/>
    </location>
</feature>